<evidence type="ECO:0000250" key="1"/>
<evidence type="ECO:0000250" key="2">
    <source>
        <dbReference type="UniProtKB" id="A0A0M3KKW3"/>
    </source>
</evidence>
<evidence type="ECO:0000250" key="3">
    <source>
        <dbReference type="UniProtKB" id="A2VBC4"/>
    </source>
</evidence>
<evidence type="ECO:0000250" key="4">
    <source>
        <dbReference type="UniProtKB" id="P0DMB4"/>
    </source>
</evidence>
<evidence type="ECO:0000250" key="5">
    <source>
        <dbReference type="UniProtKB" id="P0DMB7"/>
    </source>
</evidence>
<evidence type="ECO:0000255" key="6"/>
<evidence type="ECO:0000255" key="7">
    <source>
        <dbReference type="PROSITE-ProRule" id="PRU10037"/>
    </source>
</evidence>
<evidence type="ECO:0000303" key="8">
    <source>
    </source>
</evidence>
<evidence type="ECO:0000305" key="9"/>
<evidence type="ECO:0000305" key="10">
    <source>
    </source>
</evidence>
<protein>
    <recommendedName>
        <fullName evidence="8">Phospholipase A1 3</fullName>
        <shortName evidence="9">PLA1 3</shortName>
        <ecNumber evidence="4">3.1.1.32</ecNumber>
    </recommendedName>
    <allergenName evidence="8">Pol d 1</allergenName>
</protein>
<dbReference type="EC" id="3.1.1.32" evidence="4"/>
<dbReference type="EMBL" id="AY566647">
    <property type="protein sequence ID" value="AAS67043.1"/>
    <property type="molecule type" value="mRNA"/>
</dbReference>
<dbReference type="SMR" id="Q6Q250"/>
<dbReference type="Allergome" id="3435">
    <property type="allergen name" value="Pol d 1.0103"/>
</dbReference>
<dbReference type="Allergome" id="586">
    <property type="allergen name" value="Pol d 1"/>
</dbReference>
<dbReference type="ESTHER" id="poldo-q6q252">
    <property type="family name" value="Insect_Phospholipase"/>
</dbReference>
<dbReference type="OrthoDB" id="8183961at2759"/>
<dbReference type="Proteomes" id="UP000694924">
    <property type="component" value="Unplaced"/>
</dbReference>
<dbReference type="GO" id="GO:0005615">
    <property type="term" value="C:extracellular space"/>
    <property type="evidence" value="ECO:0007669"/>
    <property type="project" value="TreeGrafter"/>
</dbReference>
<dbReference type="GO" id="GO:0008970">
    <property type="term" value="F:phospholipase A1 activity"/>
    <property type="evidence" value="ECO:0007669"/>
    <property type="project" value="UniProtKB-EC"/>
</dbReference>
<dbReference type="GO" id="GO:0031640">
    <property type="term" value="P:killing of cells of another organism"/>
    <property type="evidence" value="ECO:0007669"/>
    <property type="project" value="UniProtKB-KW"/>
</dbReference>
<dbReference type="GO" id="GO:0016042">
    <property type="term" value="P:lipid catabolic process"/>
    <property type="evidence" value="ECO:0007669"/>
    <property type="project" value="UniProtKB-KW"/>
</dbReference>
<dbReference type="CDD" id="cd00707">
    <property type="entry name" value="Pancreat_lipase_like"/>
    <property type="match status" value="1"/>
</dbReference>
<dbReference type="Gene3D" id="3.40.50.1820">
    <property type="entry name" value="alpha/beta hydrolase"/>
    <property type="match status" value="1"/>
</dbReference>
<dbReference type="InterPro" id="IPR029058">
    <property type="entry name" value="AB_hydrolase_fold"/>
</dbReference>
<dbReference type="InterPro" id="IPR002334">
    <property type="entry name" value="Allerg_PlipaseA1"/>
</dbReference>
<dbReference type="InterPro" id="IPR013818">
    <property type="entry name" value="Lipase"/>
</dbReference>
<dbReference type="InterPro" id="IPR033906">
    <property type="entry name" value="Lipase_N"/>
</dbReference>
<dbReference type="InterPro" id="IPR000734">
    <property type="entry name" value="TAG_lipase"/>
</dbReference>
<dbReference type="PANTHER" id="PTHR11610">
    <property type="entry name" value="LIPASE"/>
    <property type="match status" value="1"/>
</dbReference>
<dbReference type="PANTHER" id="PTHR11610:SF173">
    <property type="entry name" value="LIPASE DOMAIN-CONTAINING PROTEIN-RELATED"/>
    <property type="match status" value="1"/>
</dbReference>
<dbReference type="Pfam" id="PF00151">
    <property type="entry name" value="Lipase"/>
    <property type="match status" value="1"/>
</dbReference>
<dbReference type="PRINTS" id="PR00825">
    <property type="entry name" value="DOLALLERGEN"/>
</dbReference>
<dbReference type="SUPFAM" id="SSF53474">
    <property type="entry name" value="alpha/beta-Hydrolases"/>
    <property type="match status" value="1"/>
</dbReference>
<dbReference type="PROSITE" id="PS00120">
    <property type="entry name" value="LIPASE_SER"/>
    <property type="match status" value="1"/>
</dbReference>
<proteinExistence type="evidence at transcript level"/>
<feature type="signal peptide" evidence="6">
    <location>
        <begin position="1" status="less than"/>
        <end position="4"/>
    </location>
</feature>
<feature type="propeptide" id="PRO_0000425188" evidence="1">
    <location>
        <begin position="5"/>
        <end position="14"/>
    </location>
</feature>
<feature type="chain" id="PRO_5000093093" description="Phospholipase A1 3">
    <location>
        <begin position="15"/>
        <end position="316"/>
    </location>
</feature>
<feature type="active site" description="Nucleophile" evidence="2">
    <location>
        <position position="153"/>
    </location>
</feature>
<feature type="active site" description="Charge relay system" evidence="7">
    <location>
        <position position="181"/>
    </location>
</feature>
<feature type="active site" description="Charge relay system" evidence="7">
    <location>
        <position position="242"/>
    </location>
</feature>
<feature type="disulfide bond" evidence="2">
    <location>
        <begin position="20"/>
        <end position="103"/>
    </location>
</feature>
<feature type="disulfide bond" evidence="2">
    <location>
        <begin position="192"/>
        <end position="197"/>
    </location>
</feature>
<feature type="disulfide bond" evidence="2">
    <location>
        <begin position="235"/>
        <end position="240"/>
    </location>
</feature>
<feature type="disulfide bond" evidence="2">
    <location>
        <begin position="257"/>
        <end position="284"/>
    </location>
</feature>
<feature type="disulfide bond" evidence="2">
    <location>
        <begin position="258"/>
        <end position="309"/>
    </location>
</feature>
<feature type="disulfide bond" evidence="2">
    <location>
        <begin position="277"/>
        <end position="282"/>
    </location>
</feature>
<feature type="non-terminal residue">
    <location>
        <position position="1"/>
    </location>
</feature>
<keyword id="KW-0020">Allergen</keyword>
<keyword id="KW-0204">Cytolysis</keyword>
<keyword id="KW-1015">Disulfide bond</keyword>
<keyword id="KW-0354">Hemolysis</keyword>
<keyword id="KW-0378">Hydrolase</keyword>
<keyword id="KW-0442">Lipid degradation</keyword>
<keyword id="KW-0443">Lipid metabolism</keyword>
<keyword id="KW-0964">Secreted</keyword>
<keyword id="KW-0732">Signal</keyword>
<sequence>ADDLTTLRNGTLDRGITPDCTFNEKDIELHVYSRDKRNGIILKKEILKNYDLFQKSQISHQIAILIHGFLSTGNNENFDAMAKALIEIDNFLVISVDWKKGACNAFASTNDVLGYSQAVGNTRHVGKYVADFTKLLVEQYKVPMSNIRLIGHSLGAHTSGFAGKEVQRLKLGKYKEIIGLDPAGPSFLTSKCPDRLCETDAEYVQAIHTSAILGVYYNVGSVDFYVNYGKSQPGCSEPSCSHTKAVKYLTECIKRECCLIGTPWKSYFSTPKPISQCKRDTCVCVGLNAQSYPAKGSFYVPVDKDAPYCHNEGIKL</sequence>
<name>PA13_POLDO</name>
<reference key="1">
    <citation type="journal article" date="2005" name="Acta Biol. Hung.">
        <title>Isolation, cloning and characterization of Polistes dominulus venom phospholipase A1 and its isoforms.</title>
        <authorList>
            <person name="Moawad T.I."/>
            <person name="Hoffman D.R."/>
            <person name="Zalat S."/>
        </authorList>
    </citation>
    <scope>NUCLEOTIDE SEQUENCE [MRNA]</scope>
    <source>
        <tissue>Venom gland</tissue>
    </source>
</reference>
<organism>
    <name type="scientific">Polistes dominula</name>
    <name type="common">European paper wasp</name>
    <name type="synonym">Vespa dominula</name>
    <dbReference type="NCBI Taxonomy" id="743375"/>
    <lineage>
        <taxon>Eukaryota</taxon>
        <taxon>Metazoa</taxon>
        <taxon>Ecdysozoa</taxon>
        <taxon>Arthropoda</taxon>
        <taxon>Hexapoda</taxon>
        <taxon>Insecta</taxon>
        <taxon>Pterygota</taxon>
        <taxon>Neoptera</taxon>
        <taxon>Endopterygota</taxon>
        <taxon>Hymenoptera</taxon>
        <taxon>Apocrita</taxon>
        <taxon>Aculeata</taxon>
        <taxon>Vespoidea</taxon>
        <taxon>Vespidae</taxon>
        <taxon>Polistinae</taxon>
        <taxon>Polistini</taxon>
        <taxon>Polistes</taxon>
    </lineage>
</organism>
<accession>Q6Q250</accession>
<comment type="function">
    <text evidence="4 5">Catalyzes the hydrolysis of phosphatidylcholine with phospholipase A1 activity (By similarity). May act as an allergen and induce hemolytic activity (By similarity).</text>
</comment>
<comment type="catalytic activity">
    <reaction evidence="4">
        <text>a 1,2-diacyl-sn-glycero-3-phosphocholine + H2O = a 2-acyl-sn-glycero-3-phosphocholine + a fatty acid + H(+)</text>
        <dbReference type="Rhea" id="RHEA:18689"/>
        <dbReference type="ChEBI" id="CHEBI:15377"/>
        <dbReference type="ChEBI" id="CHEBI:15378"/>
        <dbReference type="ChEBI" id="CHEBI:28868"/>
        <dbReference type="ChEBI" id="CHEBI:57643"/>
        <dbReference type="ChEBI" id="CHEBI:57875"/>
        <dbReference type="EC" id="3.1.1.32"/>
    </reaction>
</comment>
<comment type="subcellular location">
    <subcellularLocation>
        <location evidence="10">Secreted</location>
    </subcellularLocation>
</comment>
<comment type="tissue specificity">
    <text evidence="10">Expressed by the venom gland.</text>
</comment>
<comment type="allergen">
    <text evidence="3">Causes an allergic reaction in human. Binds to IgE.</text>
</comment>
<comment type="similarity">
    <text evidence="9">Belongs to the AB hydrolase superfamily. Lipase family.</text>
</comment>